<gene>
    <name evidence="1" type="primary">ndk</name>
    <name type="ordered locus">Glov_3611</name>
</gene>
<proteinExistence type="inferred from homology"/>
<evidence type="ECO:0000255" key="1">
    <source>
        <dbReference type="HAMAP-Rule" id="MF_00451"/>
    </source>
</evidence>
<protein>
    <recommendedName>
        <fullName evidence="1">Nucleoside diphosphate kinase</fullName>
        <shortName evidence="1">NDK</shortName>
        <shortName evidence="1">NDP kinase</shortName>
        <ecNumber evidence="1">2.7.4.6</ecNumber>
    </recommendedName>
    <alternativeName>
        <fullName evidence="1">Nucleoside-2-P kinase</fullName>
    </alternativeName>
</protein>
<comment type="function">
    <text evidence="1">Major role in the synthesis of nucleoside triphosphates other than ATP. The ATP gamma phosphate is transferred to the NDP beta phosphate via a ping-pong mechanism, using a phosphorylated active-site intermediate.</text>
</comment>
<comment type="catalytic activity">
    <reaction evidence="1">
        <text>a 2'-deoxyribonucleoside 5'-diphosphate + ATP = a 2'-deoxyribonucleoside 5'-triphosphate + ADP</text>
        <dbReference type="Rhea" id="RHEA:44640"/>
        <dbReference type="ChEBI" id="CHEBI:30616"/>
        <dbReference type="ChEBI" id="CHEBI:61560"/>
        <dbReference type="ChEBI" id="CHEBI:73316"/>
        <dbReference type="ChEBI" id="CHEBI:456216"/>
        <dbReference type="EC" id="2.7.4.6"/>
    </reaction>
</comment>
<comment type="catalytic activity">
    <reaction evidence="1">
        <text>a ribonucleoside 5'-diphosphate + ATP = a ribonucleoside 5'-triphosphate + ADP</text>
        <dbReference type="Rhea" id="RHEA:18113"/>
        <dbReference type="ChEBI" id="CHEBI:30616"/>
        <dbReference type="ChEBI" id="CHEBI:57930"/>
        <dbReference type="ChEBI" id="CHEBI:61557"/>
        <dbReference type="ChEBI" id="CHEBI:456216"/>
        <dbReference type="EC" id="2.7.4.6"/>
    </reaction>
</comment>
<comment type="cofactor">
    <cofactor evidence="1">
        <name>Mg(2+)</name>
        <dbReference type="ChEBI" id="CHEBI:18420"/>
    </cofactor>
</comment>
<comment type="subunit">
    <text evidence="1">Homotetramer.</text>
</comment>
<comment type="subcellular location">
    <subcellularLocation>
        <location evidence="1">Cytoplasm</location>
    </subcellularLocation>
</comment>
<comment type="similarity">
    <text evidence="1">Belongs to the NDK family.</text>
</comment>
<sequence>MERTFAIIKPDAVERGLSGKIITKIEEAGFAIVGMKKIHLSRAQAEGFYYVHKERPFFNDLCSFMSRSPVIVMCLQKENAIADWRTLMGATNPANAEPGTIRKEFAKNIEENSSHGSDAPETAAFEIPYFFNSFELVG</sequence>
<organism>
    <name type="scientific">Trichlorobacter lovleyi (strain ATCC BAA-1151 / DSM 17278 / SZ)</name>
    <name type="common">Geobacter lovleyi</name>
    <dbReference type="NCBI Taxonomy" id="398767"/>
    <lineage>
        <taxon>Bacteria</taxon>
        <taxon>Pseudomonadati</taxon>
        <taxon>Thermodesulfobacteriota</taxon>
        <taxon>Desulfuromonadia</taxon>
        <taxon>Geobacterales</taxon>
        <taxon>Geobacteraceae</taxon>
        <taxon>Trichlorobacter</taxon>
    </lineage>
</organism>
<reference key="1">
    <citation type="submission" date="2008-05" db="EMBL/GenBank/DDBJ databases">
        <title>Complete sequence of chromosome of Geobacter lovleyi SZ.</title>
        <authorList>
            <consortium name="US DOE Joint Genome Institute"/>
            <person name="Lucas S."/>
            <person name="Copeland A."/>
            <person name="Lapidus A."/>
            <person name="Glavina del Rio T."/>
            <person name="Dalin E."/>
            <person name="Tice H."/>
            <person name="Bruce D."/>
            <person name="Goodwin L."/>
            <person name="Pitluck S."/>
            <person name="Chertkov O."/>
            <person name="Meincke L."/>
            <person name="Brettin T."/>
            <person name="Detter J.C."/>
            <person name="Han C."/>
            <person name="Tapia R."/>
            <person name="Kuske C.R."/>
            <person name="Schmutz J."/>
            <person name="Larimer F."/>
            <person name="Land M."/>
            <person name="Hauser L."/>
            <person name="Kyrpides N."/>
            <person name="Mikhailova N."/>
            <person name="Sung Y."/>
            <person name="Fletcher K.E."/>
            <person name="Ritalahti K.M."/>
            <person name="Loeffler F.E."/>
            <person name="Richardson P."/>
        </authorList>
    </citation>
    <scope>NUCLEOTIDE SEQUENCE [LARGE SCALE GENOMIC DNA]</scope>
    <source>
        <strain>ATCC BAA-1151 / DSM 17278 / SZ</strain>
    </source>
</reference>
<accession>B3E3P0</accession>
<name>NDK_TRIL1</name>
<dbReference type="EC" id="2.7.4.6" evidence="1"/>
<dbReference type="EMBL" id="CP001089">
    <property type="protein sequence ID" value="ACD97312.1"/>
    <property type="molecule type" value="Genomic_DNA"/>
</dbReference>
<dbReference type="RefSeq" id="WP_012471630.1">
    <property type="nucleotide sequence ID" value="NC_010814.1"/>
</dbReference>
<dbReference type="SMR" id="B3E3P0"/>
<dbReference type="STRING" id="398767.Glov_3611"/>
<dbReference type="KEGG" id="glo:Glov_3611"/>
<dbReference type="eggNOG" id="COG0105">
    <property type="taxonomic scope" value="Bacteria"/>
</dbReference>
<dbReference type="HOGENOM" id="CLU_060216_8_1_7"/>
<dbReference type="OrthoDB" id="9801161at2"/>
<dbReference type="Proteomes" id="UP000002420">
    <property type="component" value="Chromosome"/>
</dbReference>
<dbReference type="GO" id="GO:0005737">
    <property type="term" value="C:cytoplasm"/>
    <property type="evidence" value="ECO:0007669"/>
    <property type="project" value="UniProtKB-SubCell"/>
</dbReference>
<dbReference type="GO" id="GO:0005524">
    <property type="term" value="F:ATP binding"/>
    <property type="evidence" value="ECO:0007669"/>
    <property type="project" value="UniProtKB-UniRule"/>
</dbReference>
<dbReference type="GO" id="GO:0046872">
    <property type="term" value="F:metal ion binding"/>
    <property type="evidence" value="ECO:0007669"/>
    <property type="project" value="UniProtKB-KW"/>
</dbReference>
<dbReference type="GO" id="GO:0004550">
    <property type="term" value="F:nucleoside diphosphate kinase activity"/>
    <property type="evidence" value="ECO:0007669"/>
    <property type="project" value="UniProtKB-UniRule"/>
</dbReference>
<dbReference type="GO" id="GO:0006241">
    <property type="term" value="P:CTP biosynthetic process"/>
    <property type="evidence" value="ECO:0007669"/>
    <property type="project" value="UniProtKB-UniRule"/>
</dbReference>
<dbReference type="GO" id="GO:0006183">
    <property type="term" value="P:GTP biosynthetic process"/>
    <property type="evidence" value="ECO:0007669"/>
    <property type="project" value="UniProtKB-UniRule"/>
</dbReference>
<dbReference type="GO" id="GO:0006228">
    <property type="term" value="P:UTP biosynthetic process"/>
    <property type="evidence" value="ECO:0007669"/>
    <property type="project" value="UniProtKB-UniRule"/>
</dbReference>
<dbReference type="CDD" id="cd04413">
    <property type="entry name" value="NDPk_I"/>
    <property type="match status" value="1"/>
</dbReference>
<dbReference type="FunFam" id="3.30.70.141:FF:000003">
    <property type="entry name" value="Nucleoside diphosphate kinase"/>
    <property type="match status" value="1"/>
</dbReference>
<dbReference type="Gene3D" id="3.30.70.141">
    <property type="entry name" value="Nucleoside diphosphate kinase-like domain"/>
    <property type="match status" value="1"/>
</dbReference>
<dbReference type="HAMAP" id="MF_00451">
    <property type="entry name" value="NDP_kinase"/>
    <property type="match status" value="1"/>
</dbReference>
<dbReference type="InterPro" id="IPR034907">
    <property type="entry name" value="NDK-like_dom"/>
</dbReference>
<dbReference type="InterPro" id="IPR036850">
    <property type="entry name" value="NDK-like_dom_sf"/>
</dbReference>
<dbReference type="InterPro" id="IPR001564">
    <property type="entry name" value="Nucleoside_diP_kinase"/>
</dbReference>
<dbReference type="InterPro" id="IPR023005">
    <property type="entry name" value="Nucleoside_diP_kinase_AS"/>
</dbReference>
<dbReference type="NCBIfam" id="NF001908">
    <property type="entry name" value="PRK00668.1"/>
    <property type="match status" value="1"/>
</dbReference>
<dbReference type="PANTHER" id="PTHR46161">
    <property type="entry name" value="NUCLEOSIDE DIPHOSPHATE KINASE"/>
    <property type="match status" value="1"/>
</dbReference>
<dbReference type="PANTHER" id="PTHR46161:SF3">
    <property type="entry name" value="NUCLEOSIDE DIPHOSPHATE KINASE DDB_G0292928-RELATED"/>
    <property type="match status" value="1"/>
</dbReference>
<dbReference type="Pfam" id="PF00334">
    <property type="entry name" value="NDK"/>
    <property type="match status" value="1"/>
</dbReference>
<dbReference type="PRINTS" id="PR01243">
    <property type="entry name" value="NUCDPKINASE"/>
</dbReference>
<dbReference type="SMART" id="SM00562">
    <property type="entry name" value="NDK"/>
    <property type="match status" value="1"/>
</dbReference>
<dbReference type="SUPFAM" id="SSF54919">
    <property type="entry name" value="Nucleoside diphosphate kinase, NDK"/>
    <property type="match status" value="1"/>
</dbReference>
<dbReference type="PROSITE" id="PS00469">
    <property type="entry name" value="NDPK"/>
    <property type="match status" value="1"/>
</dbReference>
<dbReference type="PROSITE" id="PS51374">
    <property type="entry name" value="NDPK_LIKE"/>
    <property type="match status" value="1"/>
</dbReference>
<keyword id="KW-0067">ATP-binding</keyword>
<keyword id="KW-0963">Cytoplasm</keyword>
<keyword id="KW-0418">Kinase</keyword>
<keyword id="KW-0460">Magnesium</keyword>
<keyword id="KW-0479">Metal-binding</keyword>
<keyword id="KW-0546">Nucleotide metabolism</keyword>
<keyword id="KW-0547">Nucleotide-binding</keyword>
<keyword id="KW-0597">Phosphoprotein</keyword>
<keyword id="KW-1185">Reference proteome</keyword>
<keyword id="KW-0808">Transferase</keyword>
<feature type="chain" id="PRO_1000192256" description="Nucleoside diphosphate kinase">
    <location>
        <begin position="1"/>
        <end position="138"/>
    </location>
</feature>
<feature type="active site" description="Pros-phosphohistidine intermediate" evidence="1">
    <location>
        <position position="115"/>
    </location>
</feature>
<feature type="binding site" evidence="1">
    <location>
        <position position="9"/>
    </location>
    <ligand>
        <name>ATP</name>
        <dbReference type="ChEBI" id="CHEBI:30616"/>
    </ligand>
</feature>
<feature type="binding site" evidence="1">
    <location>
        <position position="57"/>
    </location>
    <ligand>
        <name>ATP</name>
        <dbReference type="ChEBI" id="CHEBI:30616"/>
    </ligand>
</feature>
<feature type="binding site" evidence="1">
    <location>
        <position position="85"/>
    </location>
    <ligand>
        <name>ATP</name>
        <dbReference type="ChEBI" id="CHEBI:30616"/>
    </ligand>
</feature>
<feature type="binding site" evidence="1">
    <location>
        <position position="91"/>
    </location>
    <ligand>
        <name>ATP</name>
        <dbReference type="ChEBI" id="CHEBI:30616"/>
    </ligand>
</feature>
<feature type="binding site" evidence="1">
    <location>
        <position position="102"/>
    </location>
    <ligand>
        <name>ATP</name>
        <dbReference type="ChEBI" id="CHEBI:30616"/>
    </ligand>
</feature>
<feature type="binding site" evidence="1">
    <location>
        <position position="112"/>
    </location>
    <ligand>
        <name>ATP</name>
        <dbReference type="ChEBI" id="CHEBI:30616"/>
    </ligand>
</feature>